<name>YBEY_MYCTA</name>
<comment type="function">
    <text evidence="1">Single strand-specific metallo-endoribonuclease involved in late-stage 70S ribosome quality control and in maturation of the 3' terminus of the 16S rRNA.</text>
</comment>
<comment type="cofactor">
    <cofactor evidence="1">
        <name>Zn(2+)</name>
        <dbReference type="ChEBI" id="CHEBI:29105"/>
    </cofactor>
    <text evidence="1">Binds 1 zinc ion.</text>
</comment>
<comment type="subcellular location">
    <subcellularLocation>
        <location evidence="1">Cytoplasm</location>
    </subcellularLocation>
</comment>
<comment type="similarity">
    <text evidence="1">Belongs to the endoribonuclease YbeY family.</text>
</comment>
<comment type="sequence caution" evidence="2">
    <conflict type="erroneous initiation">
        <sequence resource="EMBL-CDS" id="ABQ74160"/>
    </conflict>
</comment>
<accession>A5U560</accession>
<proteinExistence type="inferred from homology"/>
<sequence length="177" mass="19656">MSIEVANESGIDVSEAELVSVARFVIAKMDVNPCAELSMLLLDTAAMADLHMRWMDLPGPTDVMSFPMDELEPGGRPDAPEPGPSMLGDIVLCPEFAAEQAAAAGHSLGHELALLTIHGVLHLLGYDHAEPDEEKEMFALQDRLLEEWVADQVEAYQHDRQDEKDRRLLDKSRYFDL</sequence>
<gene>
    <name evidence="1" type="primary">ybeY</name>
    <name type="ordered locus">MRA_2391</name>
</gene>
<dbReference type="EC" id="3.1.-.-" evidence="1"/>
<dbReference type="EMBL" id="CP000611">
    <property type="protein sequence ID" value="ABQ74160.1"/>
    <property type="status" value="ALT_INIT"/>
    <property type="molecule type" value="Genomic_DNA"/>
</dbReference>
<dbReference type="RefSeq" id="WP_003899292.1">
    <property type="nucleotide sequence ID" value="NZ_CP016972.1"/>
</dbReference>
<dbReference type="SMR" id="A5U560"/>
<dbReference type="KEGG" id="mra:MRA_2391"/>
<dbReference type="eggNOG" id="COG0319">
    <property type="taxonomic scope" value="Bacteria"/>
</dbReference>
<dbReference type="HOGENOM" id="CLU_106710_3_2_11"/>
<dbReference type="Proteomes" id="UP000001988">
    <property type="component" value="Chromosome"/>
</dbReference>
<dbReference type="GO" id="GO:0005737">
    <property type="term" value="C:cytoplasm"/>
    <property type="evidence" value="ECO:0007669"/>
    <property type="project" value="UniProtKB-SubCell"/>
</dbReference>
<dbReference type="GO" id="GO:0004222">
    <property type="term" value="F:metalloendopeptidase activity"/>
    <property type="evidence" value="ECO:0007669"/>
    <property type="project" value="InterPro"/>
</dbReference>
<dbReference type="GO" id="GO:0004521">
    <property type="term" value="F:RNA endonuclease activity"/>
    <property type="evidence" value="ECO:0007669"/>
    <property type="project" value="UniProtKB-UniRule"/>
</dbReference>
<dbReference type="GO" id="GO:0008270">
    <property type="term" value="F:zinc ion binding"/>
    <property type="evidence" value="ECO:0007669"/>
    <property type="project" value="UniProtKB-UniRule"/>
</dbReference>
<dbReference type="GO" id="GO:0006364">
    <property type="term" value="P:rRNA processing"/>
    <property type="evidence" value="ECO:0007669"/>
    <property type="project" value="UniProtKB-UniRule"/>
</dbReference>
<dbReference type="Gene3D" id="3.40.390.30">
    <property type="entry name" value="Metalloproteases ('zincins'), catalytic domain"/>
    <property type="match status" value="1"/>
</dbReference>
<dbReference type="HAMAP" id="MF_00009">
    <property type="entry name" value="Endoribonucl_YbeY"/>
    <property type="match status" value="1"/>
</dbReference>
<dbReference type="InterPro" id="IPR023091">
    <property type="entry name" value="MetalPrtase_cat_dom_sf_prd"/>
</dbReference>
<dbReference type="InterPro" id="IPR002036">
    <property type="entry name" value="YbeY"/>
</dbReference>
<dbReference type="InterPro" id="IPR020549">
    <property type="entry name" value="YbeY_CS"/>
</dbReference>
<dbReference type="NCBIfam" id="TIGR00043">
    <property type="entry name" value="rRNA maturation RNase YbeY"/>
    <property type="match status" value="1"/>
</dbReference>
<dbReference type="PANTHER" id="PTHR46986">
    <property type="entry name" value="ENDORIBONUCLEASE YBEY, CHLOROPLASTIC"/>
    <property type="match status" value="1"/>
</dbReference>
<dbReference type="PANTHER" id="PTHR46986:SF1">
    <property type="entry name" value="ENDORIBONUCLEASE YBEY, CHLOROPLASTIC"/>
    <property type="match status" value="1"/>
</dbReference>
<dbReference type="Pfam" id="PF02130">
    <property type="entry name" value="YbeY"/>
    <property type="match status" value="1"/>
</dbReference>
<dbReference type="SUPFAM" id="SSF55486">
    <property type="entry name" value="Metalloproteases ('zincins'), catalytic domain"/>
    <property type="match status" value="1"/>
</dbReference>
<dbReference type="PROSITE" id="PS01306">
    <property type="entry name" value="UPF0054"/>
    <property type="match status" value="1"/>
</dbReference>
<keyword id="KW-0963">Cytoplasm</keyword>
<keyword id="KW-0255">Endonuclease</keyword>
<keyword id="KW-0378">Hydrolase</keyword>
<keyword id="KW-0479">Metal-binding</keyword>
<keyword id="KW-0540">Nuclease</keyword>
<keyword id="KW-1185">Reference proteome</keyword>
<keyword id="KW-0690">Ribosome biogenesis</keyword>
<keyword id="KW-0698">rRNA processing</keyword>
<keyword id="KW-0862">Zinc</keyword>
<reference key="1">
    <citation type="journal article" date="2008" name="PLoS ONE">
        <title>Genetic basis of virulence attenuation revealed by comparative genomic analysis of Mycobacterium tuberculosis strain H37Ra versus H37Rv.</title>
        <authorList>
            <person name="Zheng H."/>
            <person name="Lu L."/>
            <person name="Wang B."/>
            <person name="Pu S."/>
            <person name="Zhang X."/>
            <person name="Zhu G."/>
            <person name="Shi W."/>
            <person name="Zhang L."/>
            <person name="Wang H."/>
            <person name="Wang S."/>
            <person name="Zhao G."/>
            <person name="Zhang Y."/>
        </authorList>
    </citation>
    <scope>NUCLEOTIDE SEQUENCE [LARGE SCALE GENOMIC DNA]</scope>
    <source>
        <strain>ATCC 25177 / H37Ra</strain>
    </source>
</reference>
<organism>
    <name type="scientific">Mycobacterium tuberculosis (strain ATCC 25177 / H37Ra)</name>
    <dbReference type="NCBI Taxonomy" id="419947"/>
    <lineage>
        <taxon>Bacteria</taxon>
        <taxon>Bacillati</taxon>
        <taxon>Actinomycetota</taxon>
        <taxon>Actinomycetes</taxon>
        <taxon>Mycobacteriales</taxon>
        <taxon>Mycobacteriaceae</taxon>
        <taxon>Mycobacterium</taxon>
        <taxon>Mycobacterium tuberculosis complex</taxon>
    </lineage>
</organism>
<protein>
    <recommendedName>
        <fullName evidence="1">Endoribonuclease YbeY</fullName>
        <ecNumber evidence="1">3.1.-.-</ecNumber>
    </recommendedName>
</protein>
<evidence type="ECO:0000255" key="1">
    <source>
        <dbReference type="HAMAP-Rule" id="MF_00009"/>
    </source>
</evidence>
<evidence type="ECO:0000305" key="2"/>
<feature type="chain" id="PRO_0000321779" description="Endoribonuclease YbeY">
    <location>
        <begin position="1"/>
        <end position="177"/>
    </location>
</feature>
<feature type="binding site" evidence="1">
    <location>
        <position position="118"/>
    </location>
    <ligand>
        <name>Zn(2+)</name>
        <dbReference type="ChEBI" id="CHEBI:29105"/>
        <note>catalytic</note>
    </ligand>
</feature>
<feature type="binding site" evidence="1">
    <location>
        <position position="122"/>
    </location>
    <ligand>
        <name>Zn(2+)</name>
        <dbReference type="ChEBI" id="CHEBI:29105"/>
        <note>catalytic</note>
    </ligand>
</feature>
<feature type="binding site" evidence="1">
    <location>
        <position position="128"/>
    </location>
    <ligand>
        <name>Zn(2+)</name>
        <dbReference type="ChEBI" id="CHEBI:29105"/>
        <note>catalytic</note>
    </ligand>
</feature>